<feature type="signal peptide" evidence="1">
    <location>
        <begin position="1"/>
        <end position="22"/>
    </location>
</feature>
<feature type="chain" id="PRO_5000129679" description="UPF0312 protein Shewmr4_1178">
    <location>
        <begin position="23"/>
        <end position="191"/>
    </location>
</feature>
<protein>
    <recommendedName>
        <fullName evidence="1">UPF0312 protein Shewmr4_1178</fullName>
    </recommendedName>
</protein>
<sequence length="191" mass="20309">MKKQLLAALIGGSLLAPMAASAADYVIDREGAHASITFKVSHLGYSYVVGRFNDFSGDFSYDAKNPTAAKVNVKVNTLSVDSNHAERDKHIRSGDFLNTAKFAEATFVSTSVEDKGNGDMVITGNFTLNGVTKPLAIQAHAVGEGQDPWGGYRAGFIGTTTFAMKDYGIKMDLGPASANVELDLVVEGVRK</sequence>
<proteinExistence type="inferred from homology"/>
<comment type="subcellular location">
    <subcellularLocation>
        <location evidence="1">Periplasm</location>
    </subcellularLocation>
</comment>
<comment type="similarity">
    <text evidence="1">Belongs to the UPF0312 family. Type 1 subfamily.</text>
</comment>
<gene>
    <name type="ordered locus">Shewmr4_1178</name>
</gene>
<organism>
    <name type="scientific">Shewanella sp. (strain MR-4)</name>
    <dbReference type="NCBI Taxonomy" id="60480"/>
    <lineage>
        <taxon>Bacteria</taxon>
        <taxon>Pseudomonadati</taxon>
        <taxon>Pseudomonadota</taxon>
        <taxon>Gammaproteobacteria</taxon>
        <taxon>Alteromonadales</taxon>
        <taxon>Shewanellaceae</taxon>
        <taxon>Shewanella</taxon>
    </lineage>
</organism>
<reference key="1">
    <citation type="submission" date="2006-08" db="EMBL/GenBank/DDBJ databases">
        <title>Complete sequence of Shewanella sp. MR-4.</title>
        <authorList>
            <consortium name="US DOE Joint Genome Institute"/>
            <person name="Copeland A."/>
            <person name="Lucas S."/>
            <person name="Lapidus A."/>
            <person name="Barry K."/>
            <person name="Detter J.C."/>
            <person name="Glavina del Rio T."/>
            <person name="Hammon N."/>
            <person name="Israni S."/>
            <person name="Dalin E."/>
            <person name="Tice H."/>
            <person name="Pitluck S."/>
            <person name="Kiss H."/>
            <person name="Brettin T."/>
            <person name="Bruce D."/>
            <person name="Han C."/>
            <person name="Tapia R."/>
            <person name="Gilna P."/>
            <person name="Schmutz J."/>
            <person name="Larimer F."/>
            <person name="Land M."/>
            <person name="Hauser L."/>
            <person name="Kyrpides N."/>
            <person name="Mikhailova N."/>
            <person name="Nealson K."/>
            <person name="Konstantinidis K."/>
            <person name="Klappenbach J."/>
            <person name="Tiedje J."/>
            <person name="Richardson P."/>
        </authorList>
    </citation>
    <scope>NUCLEOTIDE SEQUENCE [LARGE SCALE GENOMIC DNA]</scope>
    <source>
        <strain>MR-4</strain>
    </source>
</reference>
<keyword id="KW-0574">Periplasm</keyword>
<keyword id="KW-0732">Signal</keyword>
<evidence type="ECO:0000255" key="1">
    <source>
        <dbReference type="HAMAP-Rule" id="MF_00780"/>
    </source>
</evidence>
<dbReference type="EMBL" id="CP000446">
    <property type="protein sequence ID" value="ABI38258.1"/>
    <property type="molecule type" value="Genomic_DNA"/>
</dbReference>
<dbReference type="RefSeq" id="WP_011621966.1">
    <property type="nucleotide sequence ID" value="NC_008321.1"/>
</dbReference>
<dbReference type="SMR" id="Q0HL09"/>
<dbReference type="KEGG" id="she:Shewmr4_1178"/>
<dbReference type="HOGENOM" id="CLU_071003_1_2_6"/>
<dbReference type="GO" id="GO:0042597">
    <property type="term" value="C:periplasmic space"/>
    <property type="evidence" value="ECO:0007669"/>
    <property type="project" value="UniProtKB-SubCell"/>
</dbReference>
<dbReference type="Gene3D" id="2.40.128.110">
    <property type="entry name" value="Lipid/polyisoprenoid-binding, YceI-like"/>
    <property type="match status" value="1"/>
</dbReference>
<dbReference type="HAMAP" id="MF_00780">
    <property type="entry name" value="UPF0312"/>
    <property type="match status" value="1"/>
</dbReference>
<dbReference type="InterPro" id="IPR007372">
    <property type="entry name" value="Lipid/polyisoprenoid-bd_YceI"/>
</dbReference>
<dbReference type="InterPro" id="IPR036761">
    <property type="entry name" value="TTHA0802/YceI-like_sf"/>
</dbReference>
<dbReference type="InterPro" id="IPR023480">
    <property type="entry name" value="UPF0312/YceI"/>
</dbReference>
<dbReference type="NCBIfam" id="NF002994">
    <property type="entry name" value="PRK03757.1"/>
    <property type="match status" value="1"/>
</dbReference>
<dbReference type="PANTHER" id="PTHR34406">
    <property type="entry name" value="PROTEIN YCEI"/>
    <property type="match status" value="1"/>
</dbReference>
<dbReference type="PANTHER" id="PTHR34406:SF1">
    <property type="entry name" value="PROTEIN YCEI"/>
    <property type="match status" value="1"/>
</dbReference>
<dbReference type="Pfam" id="PF04264">
    <property type="entry name" value="YceI"/>
    <property type="match status" value="1"/>
</dbReference>
<dbReference type="SMART" id="SM00867">
    <property type="entry name" value="YceI"/>
    <property type="match status" value="1"/>
</dbReference>
<dbReference type="SUPFAM" id="SSF101874">
    <property type="entry name" value="YceI-like"/>
    <property type="match status" value="1"/>
</dbReference>
<accession>Q0HL09</accession>
<name>Y1178_SHESM</name>